<protein>
    <recommendedName>
        <fullName evidence="1">Protein AaeX</fullName>
    </recommendedName>
</protein>
<evidence type="ECO:0000255" key="1">
    <source>
        <dbReference type="HAMAP-Rule" id="MF_01546"/>
    </source>
</evidence>
<accession>Q5PJT7</accession>
<feature type="chain" id="PRO_0000215052" description="Protein AaeX">
    <location>
        <begin position="1"/>
        <end position="67"/>
    </location>
</feature>
<feature type="transmembrane region" description="Helical" evidence="1">
    <location>
        <begin position="3"/>
        <end position="23"/>
    </location>
</feature>
<feature type="transmembrane region" description="Helical" evidence="1">
    <location>
        <begin position="43"/>
        <end position="63"/>
    </location>
</feature>
<proteinExistence type="inferred from homology"/>
<keyword id="KW-1003">Cell membrane</keyword>
<keyword id="KW-0472">Membrane</keyword>
<keyword id="KW-0812">Transmembrane</keyword>
<keyword id="KW-1133">Transmembrane helix</keyword>
<sequence>MSLFPVIVVFGLSFPPIFFELLLSLAIFWLVRRMLVPTGIYDFVWHPALFNTALYCCLFYLISRLFV</sequence>
<organism>
    <name type="scientific">Salmonella paratyphi A (strain ATCC 9150 / SARB42)</name>
    <dbReference type="NCBI Taxonomy" id="295319"/>
    <lineage>
        <taxon>Bacteria</taxon>
        <taxon>Pseudomonadati</taxon>
        <taxon>Pseudomonadota</taxon>
        <taxon>Gammaproteobacteria</taxon>
        <taxon>Enterobacterales</taxon>
        <taxon>Enterobacteriaceae</taxon>
        <taxon>Salmonella</taxon>
    </lineage>
</organism>
<gene>
    <name evidence="1" type="primary">aaeX</name>
    <name type="ordered locus">SPA3233</name>
</gene>
<reference key="1">
    <citation type="journal article" date="2004" name="Nat. Genet.">
        <title>Comparison of genome degradation in Paratyphi A and Typhi, human-restricted serovars of Salmonella enterica that cause typhoid.</title>
        <authorList>
            <person name="McClelland M."/>
            <person name="Sanderson K.E."/>
            <person name="Clifton S.W."/>
            <person name="Latreille P."/>
            <person name="Porwollik S."/>
            <person name="Sabo A."/>
            <person name="Meyer R."/>
            <person name="Bieri T."/>
            <person name="Ozersky P."/>
            <person name="McLellan M."/>
            <person name="Harkins C.R."/>
            <person name="Wang C."/>
            <person name="Nguyen C."/>
            <person name="Berghoff A."/>
            <person name="Elliott G."/>
            <person name="Kohlberg S."/>
            <person name="Strong C."/>
            <person name="Du F."/>
            <person name="Carter J."/>
            <person name="Kremizki C."/>
            <person name="Layman D."/>
            <person name="Leonard S."/>
            <person name="Sun H."/>
            <person name="Fulton L."/>
            <person name="Nash W."/>
            <person name="Miner T."/>
            <person name="Minx P."/>
            <person name="Delehaunty K."/>
            <person name="Fronick C."/>
            <person name="Magrini V."/>
            <person name="Nhan M."/>
            <person name="Warren W."/>
            <person name="Florea L."/>
            <person name="Spieth J."/>
            <person name="Wilson R.K."/>
        </authorList>
    </citation>
    <scope>NUCLEOTIDE SEQUENCE [LARGE SCALE GENOMIC DNA]</scope>
    <source>
        <strain>ATCC 9150 / SARB42</strain>
    </source>
</reference>
<name>AAEX_SALPA</name>
<comment type="subcellular location">
    <subcellularLocation>
        <location evidence="1">Cell membrane</location>
        <topology evidence="1">Multi-pass membrane protein</topology>
    </subcellularLocation>
</comment>
<comment type="similarity">
    <text evidence="1">Belongs to the AaeX family.</text>
</comment>
<dbReference type="EMBL" id="CP000026">
    <property type="protein sequence ID" value="AAV79056.1"/>
    <property type="molecule type" value="Genomic_DNA"/>
</dbReference>
<dbReference type="RefSeq" id="WP_000051840.1">
    <property type="nucleotide sequence ID" value="NC_006511.1"/>
</dbReference>
<dbReference type="SMR" id="Q5PJT7"/>
<dbReference type="GeneID" id="45138179"/>
<dbReference type="KEGG" id="spt:SPA3233"/>
<dbReference type="HOGENOM" id="CLU_188292_0_0_6"/>
<dbReference type="Proteomes" id="UP000008185">
    <property type="component" value="Chromosome"/>
</dbReference>
<dbReference type="GO" id="GO:0005886">
    <property type="term" value="C:plasma membrane"/>
    <property type="evidence" value="ECO:0007669"/>
    <property type="project" value="UniProtKB-SubCell"/>
</dbReference>
<dbReference type="HAMAP" id="MF_01546">
    <property type="entry name" value="AaeX"/>
    <property type="match status" value="1"/>
</dbReference>
<dbReference type="InterPro" id="IPR012451">
    <property type="entry name" value="DUF1656"/>
</dbReference>
<dbReference type="NCBIfam" id="NF008615">
    <property type="entry name" value="PRK11594.1"/>
    <property type="match status" value="1"/>
</dbReference>
<dbReference type="Pfam" id="PF07869">
    <property type="entry name" value="DUF1656"/>
    <property type="match status" value="1"/>
</dbReference>